<organism>
    <name type="scientific">Prochlorococcus marinus (strain AS9601)</name>
    <dbReference type="NCBI Taxonomy" id="146891"/>
    <lineage>
        <taxon>Bacteria</taxon>
        <taxon>Bacillati</taxon>
        <taxon>Cyanobacteriota</taxon>
        <taxon>Cyanophyceae</taxon>
        <taxon>Synechococcales</taxon>
        <taxon>Prochlorococcaceae</taxon>
        <taxon>Prochlorococcus</taxon>
    </lineage>
</organism>
<name>TGT_PROMS</name>
<feature type="chain" id="PRO_1000016826" description="Queuine tRNA-ribosyltransferase">
    <location>
        <begin position="1"/>
        <end position="372"/>
    </location>
</feature>
<feature type="region of interest" description="RNA binding" evidence="1">
    <location>
        <begin position="246"/>
        <end position="252"/>
    </location>
</feature>
<feature type="region of interest" description="RNA binding; important for wobble base 34 recognition" evidence="1">
    <location>
        <begin position="270"/>
        <end position="274"/>
    </location>
</feature>
<feature type="active site" description="Proton acceptor" evidence="1">
    <location>
        <position position="92"/>
    </location>
</feature>
<feature type="active site" description="Nucleophile" evidence="1">
    <location>
        <position position="265"/>
    </location>
</feature>
<feature type="binding site" evidence="1">
    <location>
        <begin position="92"/>
        <end position="96"/>
    </location>
    <ligand>
        <name>substrate</name>
    </ligand>
</feature>
<feature type="binding site" evidence="1">
    <location>
        <position position="146"/>
    </location>
    <ligand>
        <name>substrate</name>
    </ligand>
</feature>
<feature type="binding site" evidence="1">
    <location>
        <position position="188"/>
    </location>
    <ligand>
        <name>substrate</name>
    </ligand>
</feature>
<feature type="binding site" evidence="1">
    <location>
        <position position="215"/>
    </location>
    <ligand>
        <name>substrate</name>
    </ligand>
</feature>
<feature type="binding site" evidence="1">
    <location>
        <position position="303"/>
    </location>
    <ligand>
        <name>Zn(2+)</name>
        <dbReference type="ChEBI" id="CHEBI:29105"/>
    </ligand>
</feature>
<feature type="binding site" evidence="1">
    <location>
        <position position="305"/>
    </location>
    <ligand>
        <name>Zn(2+)</name>
        <dbReference type="ChEBI" id="CHEBI:29105"/>
    </ligand>
</feature>
<feature type="binding site" evidence="1">
    <location>
        <position position="308"/>
    </location>
    <ligand>
        <name>Zn(2+)</name>
        <dbReference type="ChEBI" id="CHEBI:29105"/>
    </ligand>
</feature>
<feature type="binding site" evidence="1">
    <location>
        <position position="334"/>
    </location>
    <ligand>
        <name>Zn(2+)</name>
        <dbReference type="ChEBI" id="CHEBI:29105"/>
    </ligand>
</feature>
<sequence>MFEFEITSNCSNTAARTGIFHTPNGQVNTPKFMPVGTLATVKGISSKQLTSTGSEMILSNTFHLHLQPGEKLVKESGGIHKFMNWPKPILTDSGGYQVFSLAKLNNISDKGVEFKNPRDGSYVFLSPEKVIQIQMDLGSDVAMAFDHCPPHTANENDIEDSLQRTHSWLQKSVETHQKSNQALFGIVQGGKYPKLREYSAKYTSSFDLPGIAVGGVSVGETVEEIHSVINYVPKFLPIKKPRYLMGIGSLKEISLAVANGFDIFDCVLPTRLGRHGTAFFNDERLNLRNARFKNDFSPIDKTCKCETCKSYSRAYLHHLIRNDEILGLTLISLHNIAHLIRFTNAISTAIRDNCFTNDFAPWKTSSIAHHTW</sequence>
<comment type="function">
    <text evidence="1">Catalyzes the base-exchange of a guanine (G) residue with the queuine precursor 7-aminomethyl-7-deazaguanine (PreQ1) at position 34 (anticodon wobble position) in tRNAs with GU(N) anticodons (tRNA-Asp, -Asn, -His and -Tyr). Catalysis occurs through a double-displacement mechanism. The nucleophile active site attacks the C1' of nucleotide 34 to detach the guanine base from the RNA, forming a covalent enzyme-RNA intermediate. The proton acceptor active site deprotonates the incoming PreQ1, allowing a nucleophilic attack on the C1' of the ribose to form the product. After dissociation, two additional enzymatic reactions on the tRNA convert PreQ1 to queuine (Q), resulting in the hypermodified nucleoside queuosine (7-(((4,5-cis-dihydroxy-2-cyclopenten-1-yl)amino)methyl)-7-deazaguanosine).</text>
</comment>
<comment type="catalytic activity">
    <reaction evidence="1">
        <text>7-aminomethyl-7-carbaguanine + guanosine(34) in tRNA = 7-aminomethyl-7-carbaguanosine(34) in tRNA + guanine</text>
        <dbReference type="Rhea" id="RHEA:24104"/>
        <dbReference type="Rhea" id="RHEA-COMP:10341"/>
        <dbReference type="Rhea" id="RHEA-COMP:10342"/>
        <dbReference type="ChEBI" id="CHEBI:16235"/>
        <dbReference type="ChEBI" id="CHEBI:58703"/>
        <dbReference type="ChEBI" id="CHEBI:74269"/>
        <dbReference type="ChEBI" id="CHEBI:82833"/>
        <dbReference type="EC" id="2.4.2.29"/>
    </reaction>
</comment>
<comment type="cofactor">
    <cofactor evidence="1">
        <name>Zn(2+)</name>
        <dbReference type="ChEBI" id="CHEBI:29105"/>
    </cofactor>
    <text evidence="1">Binds 1 zinc ion per subunit.</text>
</comment>
<comment type="pathway">
    <text evidence="1">tRNA modification; tRNA-queuosine biosynthesis.</text>
</comment>
<comment type="subunit">
    <text evidence="1">Homodimer. Within each dimer, one monomer is responsible for RNA recognition and catalysis, while the other monomer binds to the replacement base PreQ1.</text>
</comment>
<comment type="similarity">
    <text evidence="1">Belongs to the queuine tRNA-ribosyltransferase family.</text>
</comment>
<evidence type="ECO:0000255" key="1">
    <source>
        <dbReference type="HAMAP-Rule" id="MF_00168"/>
    </source>
</evidence>
<accession>A2BP70</accession>
<keyword id="KW-0328">Glycosyltransferase</keyword>
<keyword id="KW-0479">Metal-binding</keyword>
<keyword id="KW-0671">Queuosine biosynthesis</keyword>
<keyword id="KW-0808">Transferase</keyword>
<keyword id="KW-0819">tRNA processing</keyword>
<keyword id="KW-0862">Zinc</keyword>
<reference key="1">
    <citation type="journal article" date="2007" name="PLoS Genet.">
        <title>Patterns and implications of gene gain and loss in the evolution of Prochlorococcus.</title>
        <authorList>
            <person name="Kettler G.C."/>
            <person name="Martiny A.C."/>
            <person name="Huang K."/>
            <person name="Zucker J."/>
            <person name="Coleman M.L."/>
            <person name="Rodrigue S."/>
            <person name="Chen F."/>
            <person name="Lapidus A."/>
            <person name="Ferriera S."/>
            <person name="Johnson J."/>
            <person name="Steglich C."/>
            <person name="Church G.M."/>
            <person name="Richardson P."/>
            <person name="Chisholm S.W."/>
        </authorList>
    </citation>
    <scope>NUCLEOTIDE SEQUENCE [LARGE SCALE GENOMIC DNA]</scope>
    <source>
        <strain>AS9601</strain>
    </source>
</reference>
<dbReference type="EC" id="2.4.2.29" evidence="1"/>
<dbReference type="EMBL" id="CP000551">
    <property type="protein sequence ID" value="ABM69581.1"/>
    <property type="molecule type" value="Genomic_DNA"/>
</dbReference>
<dbReference type="RefSeq" id="WP_011817763.1">
    <property type="nucleotide sequence ID" value="NC_008816.1"/>
</dbReference>
<dbReference type="SMR" id="A2BP70"/>
<dbReference type="STRING" id="146891.A9601_02931"/>
<dbReference type="KEGG" id="pmb:A9601_02931"/>
<dbReference type="eggNOG" id="COG0343">
    <property type="taxonomic scope" value="Bacteria"/>
</dbReference>
<dbReference type="HOGENOM" id="CLU_022060_0_1_3"/>
<dbReference type="OrthoDB" id="9805417at2"/>
<dbReference type="UniPathway" id="UPA00392"/>
<dbReference type="Proteomes" id="UP000002590">
    <property type="component" value="Chromosome"/>
</dbReference>
<dbReference type="GO" id="GO:0005829">
    <property type="term" value="C:cytosol"/>
    <property type="evidence" value="ECO:0007669"/>
    <property type="project" value="TreeGrafter"/>
</dbReference>
<dbReference type="GO" id="GO:0046872">
    <property type="term" value="F:metal ion binding"/>
    <property type="evidence" value="ECO:0007669"/>
    <property type="project" value="UniProtKB-KW"/>
</dbReference>
<dbReference type="GO" id="GO:0008479">
    <property type="term" value="F:tRNA-guanosine(34) queuine transglycosylase activity"/>
    <property type="evidence" value="ECO:0007669"/>
    <property type="project" value="UniProtKB-UniRule"/>
</dbReference>
<dbReference type="GO" id="GO:0008616">
    <property type="term" value="P:queuosine biosynthetic process"/>
    <property type="evidence" value="ECO:0007669"/>
    <property type="project" value="UniProtKB-UniRule"/>
</dbReference>
<dbReference type="GO" id="GO:0002099">
    <property type="term" value="P:tRNA wobble guanine modification"/>
    <property type="evidence" value="ECO:0007669"/>
    <property type="project" value="TreeGrafter"/>
</dbReference>
<dbReference type="GO" id="GO:0101030">
    <property type="term" value="P:tRNA-guanine transglycosylation"/>
    <property type="evidence" value="ECO:0007669"/>
    <property type="project" value="InterPro"/>
</dbReference>
<dbReference type="Gene3D" id="3.20.20.105">
    <property type="entry name" value="Queuine tRNA-ribosyltransferase-like"/>
    <property type="match status" value="1"/>
</dbReference>
<dbReference type="HAMAP" id="MF_00168">
    <property type="entry name" value="Q_tRNA_Tgt"/>
    <property type="match status" value="1"/>
</dbReference>
<dbReference type="InterPro" id="IPR050076">
    <property type="entry name" value="ArchSynthase1/Queuine_TRR"/>
</dbReference>
<dbReference type="InterPro" id="IPR004803">
    <property type="entry name" value="TGT"/>
</dbReference>
<dbReference type="InterPro" id="IPR036511">
    <property type="entry name" value="TGT-like_sf"/>
</dbReference>
<dbReference type="InterPro" id="IPR002616">
    <property type="entry name" value="tRNA_ribo_trans-like"/>
</dbReference>
<dbReference type="NCBIfam" id="TIGR00430">
    <property type="entry name" value="Q_tRNA_tgt"/>
    <property type="match status" value="1"/>
</dbReference>
<dbReference type="NCBIfam" id="TIGR00449">
    <property type="entry name" value="tgt_general"/>
    <property type="match status" value="1"/>
</dbReference>
<dbReference type="PANTHER" id="PTHR46499">
    <property type="entry name" value="QUEUINE TRNA-RIBOSYLTRANSFERASE"/>
    <property type="match status" value="1"/>
</dbReference>
<dbReference type="PANTHER" id="PTHR46499:SF1">
    <property type="entry name" value="QUEUINE TRNA-RIBOSYLTRANSFERASE"/>
    <property type="match status" value="1"/>
</dbReference>
<dbReference type="Pfam" id="PF01702">
    <property type="entry name" value="TGT"/>
    <property type="match status" value="1"/>
</dbReference>
<dbReference type="SUPFAM" id="SSF51713">
    <property type="entry name" value="tRNA-guanine transglycosylase"/>
    <property type="match status" value="1"/>
</dbReference>
<gene>
    <name evidence="1" type="primary">tgt</name>
    <name type="ordered locus">A9601_02931</name>
</gene>
<protein>
    <recommendedName>
        <fullName evidence="1">Queuine tRNA-ribosyltransferase</fullName>
        <ecNumber evidence="1">2.4.2.29</ecNumber>
    </recommendedName>
    <alternativeName>
        <fullName evidence="1">Guanine insertion enzyme</fullName>
    </alternativeName>
    <alternativeName>
        <fullName evidence="1">tRNA-guanine transglycosylase</fullName>
    </alternativeName>
</protein>
<proteinExistence type="inferred from homology"/>